<sequence length="224" mass="25474">MKYTLTRIDPDAPVERYPQEQRQTVDDPLAQEATRGIMMGRLEEVLKDTVNWGRKNSLWPYNFGISCCYVEMCTAFTSPHDVARFGAEVIRASPRQADFMVIAGTPFIKMAPVIQRLYEQLLEPKWVISMGACANSGGMYDIYSVVQGVDKFLPVDVYIPGCPPRPEAFLQALMLLQDSIGKERRPLSWVVGDQGIYRPQMPAEKERKRGERINVTNLRTPDEI</sequence>
<keyword id="KW-0004">4Fe-4S</keyword>
<keyword id="KW-0997">Cell inner membrane</keyword>
<keyword id="KW-1003">Cell membrane</keyword>
<keyword id="KW-0408">Iron</keyword>
<keyword id="KW-0411">Iron-sulfur</keyword>
<keyword id="KW-0472">Membrane</keyword>
<keyword id="KW-0479">Metal-binding</keyword>
<keyword id="KW-0520">NAD</keyword>
<keyword id="KW-0874">Quinone</keyword>
<keyword id="KW-1185">Reference proteome</keyword>
<keyword id="KW-1278">Translocase</keyword>
<keyword id="KW-0813">Transport</keyword>
<keyword id="KW-0830">Ubiquinone</keyword>
<organism>
    <name type="scientific">Shewanella oneidensis (strain ATCC 700550 / JCM 31522 / CIP 106686 / LMG 19005 / NCIMB 14063 / MR-1)</name>
    <dbReference type="NCBI Taxonomy" id="211586"/>
    <lineage>
        <taxon>Bacteria</taxon>
        <taxon>Pseudomonadati</taxon>
        <taxon>Pseudomonadota</taxon>
        <taxon>Gammaproteobacteria</taxon>
        <taxon>Alteromonadales</taxon>
        <taxon>Shewanellaceae</taxon>
        <taxon>Shewanella</taxon>
    </lineage>
</organism>
<comment type="function">
    <text evidence="1">NDH-1 shuttles electrons from NADH, via FMN and iron-sulfur (Fe-S) centers, to quinones in the respiratory chain. The immediate electron acceptor for the enzyme in this species is believed to be ubiquinone. Couples the redox reaction to proton translocation (for every two electrons transferred, four hydrogen ions are translocated across the cytoplasmic membrane), and thus conserves the redox energy in a proton gradient.</text>
</comment>
<comment type="catalytic activity">
    <reaction evidence="1">
        <text>a quinone + NADH + 5 H(+)(in) = a quinol + NAD(+) + 4 H(+)(out)</text>
        <dbReference type="Rhea" id="RHEA:57888"/>
        <dbReference type="ChEBI" id="CHEBI:15378"/>
        <dbReference type="ChEBI" id="CHEBI:24646"/>
        <dbReference type="ChEBI" id="CHEBI:57540"/>
        <dbReference type="ChEBI" id="CHEBI:57945"/>
        <dbReference type="ChEBI" id="CHEBI:132124"/>
    </reaction>
</comment>
<comment type="cofactor">
    <cofactor evidence="1">
        <name>[4Fe-4S] cluster</name>
        <dbReference type="ChEBI" id="CHEBI:49883"/>
    </cofactor>
    <text evidence="1">Binds 1 [4Fe-4S] cluster.</text>
</comment>
<comment type="subunit">
    <text evidence="1">NDH-1 is composed of 13 different subunits. Subunits NuoB, CD, E, F, and G constitute the peripheral sector of the complex.</text>
</comment>
<comment type="subcellular location">
    <subcellularLocation>
        <location evidence="1">Cell inner membrane</location>
        <topology evidence="1">Peripheral membrane protein</topology>
        <orientation evidence="1">Cytoplasmic side</orientation>
    </subcellularLocation>
</comment>
<comment type="similarity">
    <text evidence="1">Belongs to the complex I 20 kDa subunit family.</text>
</comment>
<dbReference type="EC" id="7.1.1.-" evidence="1"/>
<dbReference type="EMBL" id="AE014299">
    <property type="protein sequence ID" value="AAN54093.1"/>
    <property type="molecule type" value="Genomic_DNA"/>
</dbReference>
<dbReference type="RefSeq" id="NP_716648.1">
    <property type="nucleotide sequence ID" value="NC_004347.2"/>
</dbReference>
<dbReference type="RefSeq" id="WP_011071285.1">
    <property type="nucleotide sequence ID" value="NC_004347.2"/>
</dbReference>
<dbReference type="SMR" id="Q8EI30"/>
<dbReference type="STRING" id="211586.SO_1020"/>
<dbReference type="PaxDb" id="211586-SO_1020"/>
<dbReference type="KEGG" id="son:SO_1020"/>
<dbReference type="PATRIC" id="fig|211586.12.peg.976"/>
<dbReference type="eggNOG" id="COG0377">
    <property type="taxonomic scope" value="Bacteria"/>
</dbReference>
<dbReference type="HOGENOM" id="CLU_055737_7_3_6"/>
<dbReference type="OrthoDB" id="9786737at2"/>
<dbReference type="PhylomeDB" id="Q8EI30"/>
<dbReference type="BioCyc" id="SONE211586:G1GMP-946-MONOMER"/>
<dbReference type="Proteomes" id="UP000008186">
    <property type="component" value="Chromosome"/>
</dbReference>
<dbReference type="GO" id="GO:0005886">
    <property type="term" value="C:plasma membrane"/>
    <property type="evidence" value="ECO:0007669"/>
    <property type="project" value="UniProtKB-SubCell"/>
</dbReference>
<dbReference type="GO" id="GO:0045271">
    <property type="term" value="C:respiratory chain complex I"/>
    <property type="evidence" value="ECO:0000318"/>
    <property type="project" value="GO_Central"/>
</dbReference>
<dbReference type="GO" id="GO:0051539">
    <property type="term" value="F:4 iron, 4 sulfur cluster binding"/>
    <property type="evidence" value="ECO:0007669"/>
    <property type="project" value="UniProtKB-KW"/>
</dbReference>
<dbReference type="GO" id="GO:0005506">
    <property type="term" value="F:iron ion binding"/>
    <property type="evidence" value="ECO:0007669"/>
    <property type="project" value="UniProtKB-UniRule"/>
</dbReference>
<dbReference type="GO" id="GO:0008137">
    <property type="term" value="F:NADH dehydrogenase (ubiquinone) activity"/>
    <property type="evidence" value="ECO:0000318"/>
    <property type="project" value="GO_Central"/>
</dbReference>
<dbReference type="GO" id="GO:0050136">
    <property type="term" value="F:NADH:ubiquinone reductase (non-electrogenic) activity"/>
    <property type="evidence" value="ECO:0007669"/>
    <property type="project" value="UniProtKB-UniRule"/>
</dbReference>
<dbReference type="GO" id="GO:0048038">
    <property type="term" value="F:quinone binding"/>
    <property type="evidence" value="ECO:0007669"/>
    <property type="project" value="UniProtKB-KW"/>
</dbReference>
<dbReference type="GO" id="GO:0009060">
    <property type="term" value="P:aerobic respiration"/>
    <property type="evidence" value="ECO:0000318"/>
    <property type="project" value="GO_Central"/>
</dbReference>
<dbReference type="GO" id="GO:0015990">
    <property type="term" value="P:electron transport coupled proton transport"/>
    <property type="evidence" value="ECO:0000318"/>
    <property type="project" value="GO_Central"/>
</dbReference>
<dbReference type="FunFam" id="3.40.50.12280:FF:000002">
    <property type="entry name" value="NADH-quinone oxidoreductase subunit B"/>
    <property type="match status" value="1"/>
</dbReference>
<dbReference type="Gene3D" id="3.40.50.12280">
    <property type="match status" value="1"/>
</dbReference>
<dbReference type="HAMAP" id="MF_01356">
    <property type="entry name" value="NDH1_NuoB"/>
    <property type="match status" value="1"/>
</dbReference>
<dbReference type="InterPro" id="IPR006137">
    <property type="entry name" value="NADH_UbQ_OxRdtase-like_20kDa"/>
</dbReference>
<dbReference type="InterPro" id="IPR006138">
    <property type="entry name" value="NADH_UQ_OxRdtase_20Kd_su"/>
</dbReference>
<dbReference type="NCBIfam" id="TIGR01957">
    <property type="entry name" value="nuoB_fam"/>
    <property type="match status" value="1"/>
</dbReference>
<dbReference type="NCBIfam" id="NF005012">
    <property type="entry name" value="PRK06411.1"/>
    <property type="match status" value="1"/>
</dbReference>
<dbReference type="PANTHER" id="PTHR11995">
    <property type="entry name" value="NADH DEHYDROGENASE"/>
    <property type="match status" value="1"/>
</dbReference>
<dbReference type="PANTHER" id="PTHR11995:SF14">
    <property type="entry name" value="NADH DEHYDROGENASE [UBIQUINONE] IRON-SULFUR PROTEIN 7, MITOCHONDRIAL"/>
    <property type="match status" value="1"/>
</dbReference>
<dbReference type="Pfam" id="PF01058">
    <property type="entry name" value="Oxidored_q6"/>
    <property type="match status" value="1"/>
</dbReference>
<dbReference type="SUPFAM" id="SSF56770">
    <property type="entry name" value="HydA/Nqo6-like"/>
    <property type="match status" value="1"/>
</dbReference>
<dbReference type="PROSITE" id="PS01150">
    <property type="entry name" value="COMPLEX1_20K"/>
    <property type="match status" value="1"/>
</dbReference>
<feature type="chain" id="PRO_1000166665" description="NADH-quinone oxidoreductase subunit B">
    <location>
        <begin position="1"/>
        <end position="224"/>
    </location>
</feature>
<feature type="region of interest" description="Disordered" evidence="2">
    <location>
        <begin position="201"/>
        <end position="224"/>
    </location>
</feature>
<feature type="compositionally biased region" description="Basic and acidic residues" evidence="2">
    <location>
        <begin position="203"/>
        <end position="212"/>
    </location>
</feature>
<feature type="compositionally biased region" description="Polar residues" evidence="2">
    <location>
        <begin position="214"/>
        <end position="224"/>
    </location>
</feature>
<feature type="binding site" evidence="1">
    <location>
        <position position="67"/>
    </location>
    <ligand>
        <name>[4Fe-4S] cluster</name>
        <dbReference type="ChEBI" id="CHEBI:49883"/>
    </ligand>
</feature>
<feature type="binding site" evidence="1">
    <location>
        <position position="68"/>
    </location>
    <ligand>
        <name>[4Fe-4S] cluster</name>
        <dbReference type="ChEBI" id="CHEBI:49883"/>
    </ligand>
</feature>
<feature type="binding site" evidence="1">
    <location>
        <position position="133"/>
    </location>
    <ligand>
        <name>[4Fe-4S] cluster</name>
        <dbReference type="ChEBI" id="CHEBI:49883"/>
    </ligand>
</feature>
<feature type="binding site" evidence="1">
    <location>
        <position position="162"/>
    </location>
    <ligand>
        <name>[4Fe-4S] cluster</name>
        <dbReference type="ChEBI" id="CHEBI:49883"/>
    </ligand>
</feature>
<protein>
    <recommendedName>
        <fullName evidence="1">NADH-quinone oxidoreductase subunit B</fullName>
        <ecNumber evidence="1">7.1.1.-</ecNumber>
    </recommendedName>
    <alternativeName>
        <fullName evidence="1">NADH dehydrogenase I subunit B</fullName>
    </alternativeName>
    <alternativeName>
        <fullName evidence="1">NDH-1 subunit B</fullName>
    </alternativeName>
</protein>
<gene>
    <name evidence="1" type="primary">nuoB</name>
    <name type="ordered locus">SO_1020</name>
</gene>
<accession>Q8EI30</accession>
<reference key="1">
    <citation type="journal article" date="2002" name="Nat. Biotechnol.">
        <title>Genome sequence of the dissimilatory metal ion-reducing bacterium Shewanella oneidensis.</title>
        <authorList>
            <person name="Heidelberg J.F."/>
            <person name="Paulsen I.T."/>
            <person name="Nelson K.E."/>
            <person name="Gaidos E.J."/>
            <person name="Nelson W.C."/>
            <person name="Read T.D."/>
            <person name="Eisen J.A."/>
            <person name="Seshadri R."/>
            <person name="Ward N.L."/>
            <person name="Methe B.A."/>
            <person name="Clayton R.A."/>
            <person name="Meyer T."/>
            <person name="Tsapin A."/>
            <person name="Scott J."/>
            <person name="Beanan M.J."/>
            <person name="Brinkac L.M."/>
            <person name="Daugherty S.C."/>
            <person name="DeBoy R.T."/>
            <person name="Dodson R.J."/>
            <person name="Durkin A.S."/>
            <person name="Haft D.H."/>
            <person name="Kolonay J.F."/>
            <person name="Madupu R."/>
            <person name="Peterson J.D."/>
            <person name="Umayam L.A."/>
            <person name="White O."/>
            <person name="Wolf A.M."/>
            <person name="Vamathevan J.J."/>
            <person name="Weidman J.F."/>
            <person name="Impraim M."/>
            <person name="Lee K."/>
            <person name="Berry K.J."/>
            <person name="Lee C."/>
            <person name="Mueller J."/>
            <person name="Khouri H.M."/>
            <person name="Gill J."/>
            <person name="Utterback T.R."/>
            <person name="McDonald L.A."/>
            <person name="Feldblyum T.V."/>
            <person name="Smith H.O."/>
            <person name="Venter J.C."/>
            <person name="Nealson K.H."/>
            <person name="Fraser C.M."/>
        </authorList>
    </citation>
    <scope>NUCLEOTIDE SEQUENCE [LARGE SCALE GENOMIC DNA]</scope>
    <source>
        <strain>ATCC 700550 / JCM 31522 / CIP 106686 / LMG 19005 / NCIMB 14063 / MR-1</strain>
    </source>
</reference>
<proteinExistence type="inferred from homology"/>
<name>NUOB_SHEON</name>
<evidence type="ECO:0000255" key="1">
    <source>
        <dbReference type="HAMAP-Rule" id="MF_01356"/>
    </source>
</evidence>
<evidence type="ECO:0000256" key="2">
    <source>
        <dbReference type="SAM" id="MobiDB-lite"/>
    </source>
</evidence>